<reference key="1">
    <citation type="submission" date="2002-12" db="EMBL/GenBank/DDBJ databases">
        <title>Complete genome sequence of Vibrio vulnificus CMCP6.</title>
        <authorList>
            <person name="Rhee J.H."/>
            <person name="Kim S.Y."/>
            <person name="Chung S.S."/>
            <person name="Kim J.J."/>
            <person name="Moon Y.H."/>
            <person name="Jeong H."/>
            <person name="Choy H.E."/>
        </authorList>
    </citation>
    <scope>NUCLEOTIDE SEQUENCE [LARGE SCALE GENOMIC DNA]</scope>
    <source>
        <strain>CMCP6</strain>
    </source>
</reference>
<gene>
    <name evidence="1" type="primary">fabH2</name>
    <name type="ordered locus">VV2_0349</name>
</gene>
<comment type="function">
    <text evidence="1">Catalyzes the condensation reaction of fatty acid synthesis by the addition to an acyl acceptor of two carbons from malonyl-ACP. Catalyzes the first condensation reaction which initiates fatty acid synthesis and may therefore play a role in governing the total rate of fatty acid production. Possesses both acetoacetyl-ACP synthase and acetyl transacylase activities. Its substrate specificity determines the biosynthesis of branched-chain and/or straight-chain of fatty acids.</text>
</comment>
<comment type="catalytic activity">
    <reaction evidence="1">
        <text>malonyl-[ACP] + acetyl-CoA + H(+) = 3-oxobutanoyl-[ACP] + CO2 + CoA</text>
        <dbReference type="Rhea" id="RHEA:12080"/>
        <dbReference type="Rhea" id="RHEA-COMP:9623"/>
        <dbReference type="Rhea" id="RHEA-COMP:9625"/>
        <dbReference type="ChEBI" id="CHEBI:15378"/>
        <dbReference type="ChEBI" id="CHEBI:16526"/>
        <dbReference type="ChEBI" id="CHEBI:57287"/>
        <dbReference type="ChEBI" id="CHEBI:57288"/>
        <dbReference type="ChEBI" id="CHEBI:78449"/>
        <dbReference type="ChEBI" id="CHEBI:78450"/>
        <dbReference type="EC" id="2.3.1.180"/>
    </reaction>
</comment>
<comment type="pathway">
    <text evidence="1">Lipid metabolism; fatty acid biosynthesis.</text>
</comment>
<comment type="subunit">
    <text evidence="1">Homodimer.</text>
</comment>
<comment type="subcellular location">
    <subcellularLocation>
        <location evidence="1">Cytoplasm</location>
    </subcellularLocation>
</comment>
<comment type="domain">
    <text evidence="1">The last Arg residue of the ACP-binding site is essential for the weak association between ACP/AcpP and FabH.</text>
</comment>
<comment type="similarity">
    <text evidence="1">Belongs to the thiolase-like superfamily. FabH family.</text>
</comment>
<dbReference type="EC" id="2.3.1.180" evidence="1"/>
<dbReference type="EMBL" id="AE016796">
    <property type="protein sequence ID" value="AAO07308.1"/>
    <property type="molecule type" value="Genomic_DNA"/>
</dbReference>
<dbReference type="RefSeq" id="WP_011081309.1">
    <property type="nucleotide sequence ID" value="NC_004460.2"/>
</dbReference>
<dbReference type="SMR" id="Q8D719"/>
<dbReference type="KEGG" id="vvu:VV2_0349"/>
<dbReference type="HOGENOM" id="CLU_039592_3_0_6"/>
<dbReference type="UniPathway" id="UPA00094"/>
<dbReference type="Proteomes" id="UP000002275">
    <property type="component" value="Chromosome 2"/>
</dbReference>
<dbReference type="GO" id="GO:0005737">
    <property type="term" value="C:cytoplasm"/>
    <property type="evidence" value="ECO:0007669"/>
    <property type="project" value="UniProtKB-SubCell"/>
</dbReference>
<dbReference type="GO" id="GO:0004315">
    <property type="term" value="F:3-oxoacyl-[acyl-carrier-protein] synthase activity"/>
    <property type="evidence" value="ECO:0007669"/>
    <property type="project" value="InterPro"/>
</dbReference>
<dbReference type="GO" id="GO:0033818">
    <property type="term" value="F:beta-ketoacyl-acyl-carrier-protein synthase III activity"/>
    <property type="evidence" value="ECO:0007669"/>
    <property type="project" value="UniProtKB-UniRule"/>
</dbReference>
<dbReference type="GO" id="GO:0006633">
    <property type="term" value="P:fatty acid biosynthetic process"/>
    <property type="evidence" value="ECO:0007669"/>
    <property type="project" value="UniProtKB-UniRule"/>
</dbReference>
<dbReference type="CDD" id="cd00830">
    <property type="entry name" value="KAS_III"/>
    <property type="match status" value="1"/>
</dbReference>
<dbReference type="FunFam" id="3.40.47.10:FF:000004">
    <property type="entry name" value="3-oxoacyl-[acyl-carrier-protein] synthase 3"/>
    <property type="match status" value="1"/>
</dbReference>
<dbReference type="Gene3D" id="3.40.47.10">
    <property type="match status" value="1"/>
</dbReference>
<dbReference type="HAMAP" id="MF_01815">
    <property type="entry name" value="FabH"/>
    <property type="match status" value="1"/>
</dbReference>
<dbReference type="InterPro" id="IPR013747">
    <property type="entry name" value="ACP_syn_III_C"/>
</dbReference>
<dbReference type="InterPro" id="IPR013751">
    <property type="entry name" value="ACP_syn_III_N"/>
</dbReference>
<dbReference type="InterPro" id="IPR004655">
    <property type="entry name" value="FabH"/>
</dbReference>
<dbReference type="InterPro" id="IPR016039">
    <property type="entry name" value="Thiolase-like"/>
</dbReference>
<dbReference type="NCBIfam" id="TIGR00747">
    <property type="entry name" value="fabH"/>
    <property type="match status" value="1"/>
</dbReference>
<dbReference type="NCBIfam" id="NF006829">
    <property type="entry name" value="PRK09352.1"/>
    <property type="match status" value="1"/>
</dbReference>
<dbReference type="PANTHER" id="PTHR43091">
    <property type="entry name" value="3-OXOACYL-[ACYL-CARRIER-PROTEIN] SYNTHASE"/>
    <property type="match status" value="1"/>
</dbReference>
<dbReference type="PANTHER" id="PTHR43091:SF2">
    <property type="entry name" value="BETA-KETOACYL-[ACYL-CARRIER-PROTEIN] SYNTHASE III 2"/>
    <property type="match status" value="1"/>
</dbReference>
<dbReference type="Pfam" id="PF08545">
    <property type="entry name" value="ACP_syn_III"/>
    <property type="match status" value="1"/>
</dbReference>
<dbReference type="Pfam" id="PF08541">
    <property type="entry name" value="ACP_syn_III_C"/>
    <property type="match status" value="1"/>
</dbReference>
<dbReference type="SUPFAM" id="SSF53901">
    <property type="entry name" value="Thiolase-like"/>
    <property type="match status" value="1"/>
</dbReference>
<feature type="chain" id="PRO_0000110507" description="Beta-ketoacyl-[acyl-carrier-protein] synthase III 2">
    <location>
        <begin position="1"/>
        <end position="362"/>
    </location>
</feature>
<feature type="region of interest" description="ACP-binding" evidence="1">
    <location>
        <begin position="252"/>
        <end position="256"/>
    </location>
</feature>
<feature type="active site" evidence="1">
    <location>
        <position position="113"/>
    </location>
</feature>
<feature type="active site" evidence="1">
    <location>
        <position position="251"/>
    </location>
</feature>
<feature type="active site" evidence="1">
    <location>
        <position position="281"/>
    </location>
</feature>
<protein>
    <recommendedName>
        <fullName evidence="1">Beta-ketoacyl-[acyl-carrier-protein] synthase III 2</fullName>
        <shortName evidence="1">Beta-ketoacyl-ACP synthase III 2</shortName>
        <shortName evidence="1">KAS III 2</shortName>
        <ecNumber evidence="1">2.3.1.180</ecNumber>
    </recommendedName>
    <alternativeName>
        <fullName evidence="1">3-oxoacyl-[acyl-carrier-protein] synthase 3 2</fullName>
    </alternativeName>
    <alternativeName>
        <fullName evidence="1">3-oxoacyl-[acyl-carrier-protein] synthase III 2</fullName>
    </alternativeName>
</protein>
<accession>Q8D719</accession>
<proteinExistence type="inferred from homology"/>
<name>FABH2_VIBVU</name>
<evidence type="ECO:0000255" key="1">
    <source>
        <dbReference type="HAMAP-Rule" id="MF_01815"/>
    </source>
</evidence>
<sequence length="362" mass="38728">MTNYYAEITGWGKCLPPAVLSNDDLSTFLDTSDEWIRTRTGIENRRISHVNTSDLATVAAKQALARAGITAQDIDLIIVATCSPDSLIPNIASMVQKNLEIEAAAAFDLNAACTGFVYGLETGTRLIQSGAYRHALIIGAERLSFYIDWAMRDTAVLFGDGAGAVVLSRTEEAVGLQNAKSGCDAQGRDILSVPKFGTSMDRFAADNGYWDFNFVGKEIFKRAVKGMGSAAAHVLAHAGMSKDDINVVIPHQANIRIIQTLCDLSGIDQSKAFVNIQKYGNTSAATVPIALCEAVEQGHIKAGDNILLAAFGAGLTWGAGLVKWGQRVEAISESDAALPECDKSALELLKNAIELCNARRDK</sequence>
<keyword id="KW-0012">Acyltransferase</keyword>
<keyword id="KW-0963">Cytoplasm</keyword>
<keyword id="KW-0275">Fatty acid biosynthesis</keyword>
<keyword id="KW-0276">Fatty acid metabolism</keyword>
<keyword id="KW-0444">Lipid biosynthesis</keyword>
<keyword id="KW-0443">Lipid metabolism</keyword>
<keyword id="KW-0511">Multifunctional enzyme</keyword>
<keyword id="KW-0808">Transferase</keyword>
<organism>
    <name type="scientific">Vibrio vulnificus (strain CMCP6)</name>
    <dbReference type="NCBI Taxonomy" id="216895"/>
    <lineage>
        <taxon>Bacteria</taxon>
        <taxon>Pseudomonadati</taxon>
        <taxon>Pseudomonadota</taxon>
        <taxon>Gammaproteobacteria</taxon>
        <taxon>Vibrionales</taxon>
        <taxon>Vibrionaceae</taxon>
        <taxon>Vibrio</taxon>
    </lineage>
</organism>